<proteinExistence type="evidence at protein level"/>
<evidence type="ECO:0000250" key="1"/>
<evidence type="ECO:0000269" key="2">
    <source>
    </source>
</evidence>
<evidence type="ECO:0000269" key="3">
    <source>
    </source>
</evidence>
<evidence type="ECO:0000305" key="4"/>
<evidence type="ECO:0000305" key="5">
    <source>
    </source>
</evidence>
<name>CH60C_ARATH</name>
<protein>
    <recommendedName>
        <fullName>Chaperonin CPN60-like 2, mitochondrial</fullName>
    </recommendedName>
    <alternativeName>
        <fullName>HSP60-like 2</fullName>
    </alternativeName>
</protein>
<keyword id="KW-0067">ATP-binding</keyword>
<keyword id="KW-0143">Chaperone</keyword>
<keyword id="KW-0496">Mitochondrion</keyword>
<keyword id="KW-0547">Nucleotide-binding</keyword>
<keyword id="KW-1185">Reference proteome</keyword>
<keyword id="KW-0346">Stress response</keyword>
<keyword id="KW-0809">Transit peptide</keyword>
<sequence length="572" mass="60466">MYRVLSKLSSSIGSSTSRKLVSGRIISSRNYAAKDISFGIGARAAMLQGVSEVAEAVKVTMGPKGRNVIIESSYGGPKITKDGVTVAKSISFQAKAKNIGAELVKQVASATNKVAGDGTTCATVLTQAILIEGCKSVAAGVNVMDLRVGINMAIAAVVSDLKSRAVMISTPEEITQVATISANGEREIGELIARAMEKVGKEGVITVADGNTLDNELEVVEGMKLARGYISPYFITDEKTQKCELENPIILIHEKKISDINSLLKVLEAAVKSSRPLLIVAEDVESDALAMLILNKHHGGLKVCAIKAPGFGDNRKASLDDLAVLTGAEVISEERGLSLEKIRPELLGTAKKVTVTRDDTIILHGGGDKKLIEERCEELRSANEKSTSTFDQEKTQERLSKLSGGVAVFKVGGASESEVGERKDRVTDALNATRAAVEEGIIPGGGVALLYATKALDNLQTENEDQRRGVQIVQNALKAPAFTIAANAGYDGSLVVGKLLEQDDCNFGFDAAKGKYVDMVKAGIIDPVKVIRTALTDAASVSLLLTTTEASVLVKADENTPNHVPDMASMGM</sequence>
<organism>
    <name type="scientific">Arabidopsis thaliana</name>
    <name type="common">Mouse-ear cress</name>
    <dbReference type="NCBI Taxonomy" id="3702"/>
    <lineage>
        <taxon>Eukaryota</taxon>
        <taxon>Viridiplantae</taxon>
        <taxon>Streptophyta</taxon>
        <taxon>Embryophyta</taxon>
        <taxon>Tracheophyta</taxon>
        <taxon>Spermatophyta</taxon>
        <taxon>Magnoliopsida</taxon>
        <taxon>eudicotyledons</taxon>
        <taxon>Gunneridae</taxon>
        <taxon>Pentapetalae</taxon>
        <taxon>rosids</taxon>
        <taxon>malvids</taxon>
        <taxon>Brassicales</taxon>
        <taxon>Brassicaceae</taxon>
        <taxon>Camelineae</taxon>
        <taxon>Arabidopsis</taxon>
    </lineage>
</organism>
<feature type="transit peptide" description="Mitochondrion" evidence="3">
    <location>
        <begin position="1"/>
        <end position="31"/>
    </location>
</feature>
<feature type="chain" id="PRO_0000045793" description="Chaperonin CPN60-like 2, mitochondrial">
    <location>
        <begin position="32"/>
        <end position="572"/>
    </location>
</feature>
<feature type="sequence conflict" description="In Ref. 3; AAL09728." evidence="4" ref="3">
    <original>SS</original>
    <variation>KY</variation>
    <location>
        <begin position="273"/>
        <end position="274"/>
    </location>
</feature>
<dbReference type="EMBL" id="AB028610">
    <property type="protein sequence ID" value="BAB02911.1"/>
    <property type="molecule type" value="Genomic_DNA"/>
</dbReference>
<dbReference type="EMBL" id="CP002686">
    <property type="protein sequence ID" value="AEE75427.1"/>
    <property type="molecule type" value="Genomic_DNA"/>
</dbReference>
<dbReference type="EMBL" id="AY056782">
    <property type="protein sequence ID" value="AAL09728.1"/>
    <property type="status" value="ALT_FRAME"/>
    <property type="molecule type" value="mRNA"/>
</dbReference>
<dbReference type="EMBL" id="AY094453">
    <property type="protein sequence ID" value="AAM19824.1"/>
    <property type="molecule type" value="mRNA"/>
</dbReference>
<dbReference type="EMBL" id="BT015923">
    <property type="protein sequence ID" value="AAU95459.1"/>
    <property type="molecule type" value="mRNA"/>
</dbReference>
<dbReference type="SMR" id="Q93ZM7"/>
<dbReference type="BioGRID" id="5933">
    <property type="interactions" value="18"/>
</dbReference>
<dbReference type="FunCoup" id="Q93ZM7">
    <property type="interactions" value="3216"/>
</dbReference>
<dbReference type="IntAct" id="Q93ZM7">
    <property type="interactions" value="3"/>
</dbReference>
<dbReference type="STRING" id="3702.Q93ZM7"/>
<dbReference type="iPTMnet" id="Q93ZM7"/>
<dbReference type="MetOSite" id="Q93ZM7"/>
<dbReference type="PaxDb" id="3702-AT3G13860.1"/>
<dbReference type="ProteomicsDB" id="220612"/>
<dbReference type="EnsemblPlants" id="AT3G13860.1">
    <property type="protein sequence ID" value="AT3G13860.1"/>
    <property type="gene ID" value="AT3G13860"/>
</dbReference>
<dbReference type="Gramene" id="AT3G13860.1">
    <property type="protein sequence ID" value="AT3G13860.1"/>
    <property type="gene ID" value="AT3G13860"/>
</dbReference>
<dbReference type="KEGG" id="ath:AT3G13860"/>
<dbReference type="Araport" id="AT3G13860"/>
<dbReference type="TAIR" id="AT3G13860">
    <property type="gene designation" value="HSP60-3A"/>
</dbReference>
<dbReference type="eggNOG" id="KOG0356">
    <property type="taxonomic scope" value="Eukaryota"/>
</dbReference>
<dbReference type="HOGENOM" id="CLU_016503_3_0_1"/>
<dbReference type="InParanoid" id="Q93ZM7"/>
<dbReference type="OMA" id="SSAMFDK"/>
<dbReference type="PhylomeDB" id="Q93ZM7"/>
<dbReference type="CD-CODE" id="4299E36E">
    <property type="entry name" value="Nucleolus"/>
</dbReference>
<dbReference type="PRO" id="PR:Q93ZM7"/>
<dbReference type="Proteomes" id="UP000006548">
    <property type="component" value="Chromosome 3"/>
</dbReference>
<dbReference type="ExpressionAtlas" id="Q93ZM7">
    <property type="expression patterns" value="baseline and differential"/>
</dbReference>
<dbReference type="GO" id="GO:0005829">
    <property type="term" value="C:cytosol"/>
    <property type="evidence" value="ECO:0007005"/>
    <property type="project" value="TAIR"/>
</dbReference>
<dbReference type="GO" id="GO:0005739">
    <property type="term" value="C:mitochondrion"/>
    <property type="evidence" value="ECO:0007005"/>
    <property type="project" value="TAIR"/>
</dbReference>
<dbReference type="GO" id="GO:0000325">
    <property type="term" value="C:plant-type vacuole"/>
    <property type="evidence" value="ECO:0007005"/>
    <property type="project" value="TAIR"/>
</dbReference>
<dbReference type="GO" id="GO:0005524">
    <property type="term" value="F:ATP binding"/>
    <property type="evidence" value="ECO:0007669"/>
    <property type="project" value="UniProtKB-KW"/>
</dbReference>
<dbReference type="GO" id="GO:0140662">
    <property type="term" value="F:ATP-dependent protein folding chaperone"/>
    <property type="evidence" value="ECO:0007669"/>
    <property type="project" value="InterPro"/>
</dbReference>
<dbReference type="GO" id="GO:0042026">
    <property type="term" value="P:protein refolding"/>
    <property type="evidence" value="ECO:0007669"/>
    <property type="project" value="InterPro"/>
</dbReference>
<dbReference type="CDD" id="cd03344">
    <property type="entry name" value="GroEL"/>
    <property type="match status" value="1"/>
</dbReference>
<dbReference type="FunFam" id="3.50.7.10:FF:000001">
    <property type="entry name" value="60 kDa chaperonin"/>
    <property type="match status" value="1"/>
</dbReference>
<dbReference type="Gene3D" id="3.50.7.10">
    <property type="entry name" value="GroEL"/>
    <property type="match status" value="1"/>
</dbReference>
<dbReference type="Gene3D" id="1.10.560.10">
    <property type="entry name" value="GroEL-like equatorial domain"/>
    <property type="match status" value="1"/>
</dbReference>
<dbReference type="Gene3D" id="3.30.260.10">
    <property type="entry name" value="TCP-1-like chaperonin intermediate domain"/>
    <property type="match status" value="1"/>
</dbReference>
<dbReference type="HAMAP" id="MF_00600">
    <property type="entry name" value="CH60"/>
    <property type="match status" value="1"/>
</dbReference>
<dbReference type="InterPro" id="IPR018370">
    <property type="entry name" value="Chaperonin_Cpn60_CS"/>
</dbReference>
<dbReference type="InterPro" id="IPR001844">
    <property type="entry name" value="Cpn60/GroEL"/>
</dbReference>
<dbReference type="InterPro" id="IPR002423">
    <property type="entry name" value="Cpn60/GroEL/TCP-1"/>
</dbReference>
<dbReference type="InterPro" id="IPR027409">
    <property type="entry name" value="GroEL-like_apical_dom_sf"/>
</dbReference>
<dbReference type="InterPro" id="IPR027413">
    <property type="entry name" value="GROEL-like_equatorial_sf"/>
</dbReference>
<dbReference type="InterPro" id="IPR027410">
    <property type="entry name" value="TCP-1-like_intermed_sf"/>
</dbReference>
<dbReference type="NCBIfam" id="TIGR02348">
    <property type="entry name" value="GroEL"/>
    <property type="match status" value="1"/>
</dbReference>
<dbReference type="NCBIfam" id="NF000592">
    <property type="entry name" value="PRK00013.1"/>
    <property type="match status" value="1"/>
</dbReference>
<dbReference type="NCBIfam" id="NF009487">
    <property type="entry name" value="PRK12849.1"/>
    <property type="match status" value="1"/>
</dbReference>
<dbReference type="NCBIfam" id="NF009488">
    <property type="entry name" value="PRK12850.1"/>
    <property type="match status" value="1"/>
</dbReference>
<dbReference type="NCBIfam" id="NF009489">
    <property type="entry name" value="PRK12851.1"/>
    <property type="match status" value="1"/>
</dbReference>
<dbReference type="PANTHER" id="PTHR45633">
    <property type="entry name" value="60 KDA HEAT SHOCK PROTEIN, MITOCHONDRIAL"/>
    <property type="match status" value="1"/>
</dbReference>
<dbReference type="Pfam" id="PF00118">
    <property type="entry name" value="Cpn60_TCP1"/>
    <property type="match status" value="1"/>
</dbReference>
<dbReference type="PRINTS" id="PR00298">
    <property type="entry name" value="CHAPERONIN60"/>
</dbReference>
<dbReference type="SUPFAM" id="SSF52029">
    <property type="entry name" value="GroEL apical domain-like"/>
    <property type="match status" value="1"/>
</dbReference>
<dbReference type="SUPFAM" id="SSF48592">
    <property type="entry name" value="GroEL equatorial domain-like"/>
    <property type="match status" value="1"/>
</dbReference>
<dbReference type="SUPFAM" id="SSF54849">
    <property type="entry name" value="GroEL-intermediate domain like"/>
    <property type="match status" value="1"/>
</dbReference>
<dbReference type="PROSITE" id="PS00296">
    <property type="entry name" value="CHAPERONINS_CPN60"/>
    <property type="match status" value="1"/>
</dbReference>
<gene>
    <name type="ordered locus">At3g13860</name>
    <name type="ORF">MCP4.9</name>
</gene>
<comment type="function">
    <text evidence="1">Implicated in mitochondrial protein import and macromolecular assembly. May facilitate the correct folding of imported proteins. May also prevent misfolding and promote the refolding and proper assembly of unfolded polypeptides generated under stress conditions in the mitochondrial matrix (By similarity).</text>
</comment>
<comment type="subcellular location">
    <subcellularLocation>
        <location evidence="2 5">Mitochondrion</location>
    </subcellularLocation>
</comment>
<comment type="similarity">
    <text evidence="4">Belongs to the chaperonin (HSP60) family.</text>
</comment>
<comment type="sequence caution" evidence="4">
    <conflict type="frameshift">
        <sequence resource="EMBL-CDS" id="AAL09728"/>
    </conflict>
</comment>
<reference key="1">
    <citation type="journal article" date="2000" name="DNA Res.">
        <title>Structural analysis of Arabidopsis thaliana chromosome 3. I. Sequence features of the regions of 4,504,864 bp covered by sixty P1 and TAC clones.</title>
        <authorList>
            <person name="Sato S."/>
            <person name="Nakamura Y."/>
            <person name="Kaneko T."/>
            <person name="Katoh T."/>
            <person name="Asamizu E."/>
            <person name="Tabata S."/>
        </authorList>
    </citation>
    <scope>NUCLEOTIDE SEQUENCE [LARGE SCALE GENOMIC DNA]</scope>
    <source>
        <strain>cv. Columbia</strain>
    </source>
</reference>
<reference key="2">
    <citation type="journal article" date="2017" name="Plant J.">
        <title>Araport11: a complete reannotation of the Arabidopsis thaliana reference genome.</title>
        <authorList>
            <person name="Cheng C.Y."/>
            <person name="Krishnakumar V."/>
            <person name="Chan A.P."/>
            <person name="Thibaud-Nissen F."/>
            <person name="Schobel S."/>
            <person name="Town C.D."/>
        </authorList>
    </citation>
    <scope>GENOME REANNOTATION</scope>
    <source>
        <strain>cv. Columbia</strain>
    </source>
</reference>
<reference key="3">
    <citation type="journal article" date="2003" name="Science">
        <title>Empirical analysis of transcriptional activity in the Arabidopsis genome.</title>
        <authorList>
            <person name="Yamada K."/>
            <person name="Lim J."/>
            <person name="Dale J.M."/>
            <person name="Chen H."/>
            <person name="Shinn P."/>
            <person name="Palm C.J."/>
            <person name="Southwick A.M."/>
            <person name="Wu H.C."/>
            <person name="Kim C.J."/>
            <person name="Nguyen M."/>
            <person name="Pham P.K."/>
            <person name="Cheuk R.F."/>
            <person name="Karlin-Newmann G."/>
            <person name="Liu S.X."/>
            <person name="Lam B."/>
            <person name="Sakano H."/>
            <person name="Wu T."/>
            <person name="Yu G."/>
            <person name="Miranda M."/>
            <person name="Quach H.L."/>
            <person name="Tripp M."/>
            <person name="Chang C.H."/>
            <person name="Lee J.M."/>
            <person name="Toriumi M.J."/>
            <person name="Chan M.M."/>
            <person name="Tang C.C."/>
            <person name="Onodera C.S."/>
            <person name="Deng J.M."/>
            <person name="Akiyama K."/>
            <person name="Ansari Y."/>
            <person name="Arakawa T."/>
            <person name="Banh J."/>
            <person name="Banno F."/>
            <person name="Bowser L."/>
            <person name="Brooks S.Y."/>
            <person name="Carninci P."/>
            <person name="Chao Q."/>
            <person name="Choy N."/>
            <person name="Enju A."/>
            <person name="Goldsmith A.D."/>
            <person name="Gurjal M."/>
            <person name="Hansen N.F."/>
            <person name="Hayashizaki Y."/>
            <person name="Johnson-Hopson C."/>
            <person name="Hsuan V.W."/>
            <person name="Iida K."/>
            <person name="Karnes M."/>
            <person name="Khan S."/>
            <person name="Koesema E."/>
            <person name="Ishida J."/>
            <person name="Jiang P.X."/>
            <person name="Jones T."/>
            <person name="Kawai J."/>
            <person name="Kamiya A."/>
            <person name="Meyers C."/>
            <person name="Nakajima M."/>
            <person name="Narusaka M."/>
            <person name="Seki M."/>
            <person name="Sakurai T."/>
            <person name="Satou M."/>
            <person name="Tamse R."/>
            <person name="Vaysberg M."/>
            <person name="Wallender E.K."/>
            <person name="Wong C."/>
            <person name="Yamamura Y."/>
            <person name="Yuan S."/>
            <person name="Shinozaki K."/>
            <person name="Davis R.W."/>
            <person name="Theologis A."/>
            <person name="Ecker J.R."/>
        </authorList>
    </citation>
    <scope>NUCLEOTIDE SEQUENCE [LARGE SCALE MRNA]</scope>
    <source>
        <strain>cv. Columbia</strain>
    </source>
</reference>
<reference key="4">
    <citation type="submission" date="2004-10" db="EMBL/GenBank/DDBJ databases">
        <title>Arabidopsis ORF clones.</title>
        <authorList>
            <person name="Cheuk R.F."/>
            <person name="Chen H."/>
            <person name="Kim C.J."/>
            <person name="Shinn P."/>
            <person name="Ecker J.R."/>
        </authorList>
    </citation>
    <scope>NUCLEOTIDE SEQUENCE [LARGE SCALE MRNA]</scope>
    <source>
        <strain>cv. Columbia</strain>
    </source>
</reference>
<reference key="5">
    <citation type="journal article" date="2004" name="Plant Cell">
        <title>Experimental analysis of the Arabidopsis mitochondrial proteome highlights signaling and regulatory components, provides assessment of targeting prediction programs, and indicates plant-specific mitochondrial proteins.</title>
        <authorList>
            <person name="Heazlewood J.L."/>
            <person name="Tonti-Filippini J.S."/>
            <person name="Gout A.M."/>
            <person name="Day D.A."/>
            <person name="Whelan J."/>
            <person name="Millar A.H."/>
        </authorList>
    </citation>
    <scope>IDENTIFICATION BY MASS SPECTROMETRY</scope>
    <scope>SUBCELLULAR LOCATION [LARGE SCALE ANALYSIS]</scope>
    <source>
        <strain>cv. Landsberg erecta</strain>
    </source>
</reference>
<reference key="6">
    <citation type="journal article" date="2015" name="J. Exp. Bot.">
        <title>Identification of cleavage sites and substrate proteins for two mitochondrial intermediate peptidases in Arabidopsis thaliana.</title>
        <authorList>
            <person name="Carrie C."/>
            <person name="Venne A.S."/>
            <person name="Zahedi R.P."/>
            <person name="Soll J."/>
        </authorList>
    </citation>
    <scope>IDENTIFICATION BY MASS SPECTROMETRY</scope>
    <scope>CLEAVAGE OF TRANSIT PEPTIDE AFTER TYR-31</scope>
</reference>
<accession>Q93ZM7</accession>
<accession>Q9LRW0</accession>